<comment type="subcellular location">
    <subcellularLocation>
        <location evidence="3">Secreted</location>
    </subcellularLocation>
</comment>
<organism>
    <name type="scientific">Dictyostelium discoideum</name>
    <name type="common">Social amoeba</name>
    <dbReference type="NCBI Taxonomy" id="44689"/>
    <lineage>
        <taxon>Eukaryota</taxon>
        <taxon>Amoebozoa</taxon>
        <taxon>Evosea</taxon>
        <taxon>Eumycetozoa</taxon>
        <taxon>Dictyostelia</taxon>
        <taxon>Dictyosteliales</taxon>
        <taxon>Dictyosteliaceae</taxon>
        <taxon>Dictyostelium</taxon>
    </lineage>
</organism>
<feature type="signal peptide" evidence="1">
    <location>
        <begin position="1"/>
        <end position="23"/>
    </location>
</feature>
<feature type="chain" id="PRO_0000317640" description="Uncharacterized histidine-rich protein DDB_G0274557">
    <location>
        <begin position="24"/>
        <end position="233"/>
    </location>
</feature>
<feature type="region of interest" description="Disordered" evidence="2">
    <location>
        <begin position="42"/>
        <end position="217"/>
    </location>
</feature>
<feature type="compositionally biased region" description="Low complexity" evidence="2">
    <location>
        <begin position="45"/>
        <end position="64"/>
    </location>
</feature>
<feature type="compositionally biased region" description="Basic residues" evidence="2">
    <location>
        <begin position="65"/>
        <end position="211"/>
    </location>
</feature>
<evidence type="ECO:0000255" key="1"/>
<evidence type="ECO:0000256" key="2">
    <source>
        <dbReference type="SAM" id="MobiDB-lite"/>
    </source>
</evidence>
<evidence type="ECO:0000305" key="3"/>
<accession>Q8MP30</accession>
<accession>Q555N4</accession>
<accession>Q8T164</accession>
<reference key="1">
    <citation type="journal article" date="2002" name="Nature">
        <title>Sequence and analysis of chromosome 2 of Dictyostelium discoideum.</title>
        <authorList>
            <person name="Gloeckner G."/>
            <person name="Eichinger L."/>
            <person name="Szafranski K."/>
            <person name="Pachebat J.A."/>
            <person name="Bankier A.T."/>
            <person name="Dear P.H."/>
            <person name="Lehmann R."/>
            <person name="Baumgart C."/>
            <person name="Parra G."/>
            <person name="Abril J.F."/>
            <person name="Guigo R."/>
            <person name="Kumpf K."/>
            <person name="Tunggal B."/>
            <person name="Cox E.C."/>
            <person name="Quail M.A."/>
            <person name="Platzer M."/>
            <person name="Rosenthal A."/>
            <person name="Noegel A.A."/>
        </authorList>
    </citation>
    <scope>NUCLEOTIDE SEQUENCE [LARGE SCALE GENOMIC DNA]</scope>
    <source>
        <strain>AX4</strain>
    </source>
</reference>
<reference key="2">
    <citation type="journal article" date="2005" name="Nature">
        <title>The genome of the social amoeba Dictyostelium discoideum.</title>
        <authorList>
            <person name="Eichinger L."/>
            <person name="Pachebat J.A."/>
            <person name="Gloeckner G."/>
            <person name="Rajandream M.A."/>
            <person name="Sucgang R."/>
            <person name="Berriman M."/>
            <person name="Song J."/>
            <person name="Olsen R."/>
            <person name="Szafranski K."/>
            <person name="Xu Q."/>
            <person name="Tunggal B."/>
            <person name="Kummerfeld S."/>
            <person name="Madera M."/>
            <person name="Konfortov B.A."/>
            <person name="Rivero F."/>
            <person name="Bankier A.T."/>
            <person name="Lehmann R."/>
            <person name="Hamlin N."/>
            <person name="Davies R."/>
            <person name="Gaudet P."/>
            <person name="Fey P."/>
            <person name="Pilcher K."/>
            <person name="Chen G."/>
            <person name="Saunders D."/>
            <person name="Sodergren E.J."/>
            <person name="Davis P."/>
            <person name="Kerhornou A."/>
            <person name="Nie X."/>
            <person name="Hall N."/>
            <person name="Anjard C."/>
            <person name="Hemphill L."/>
            <person name="Bason N."/>
            <person name="Farbrother P."/>
            <person name="Desany B."/>
            <person name="Just E."/>
            <person name="Morio T."/>
            <person name="Rost R."/>
            <person name="Churcher C.M."/>
            <person name="Cooper J."/>
            <person name="Haydock S."/>
            <person name="van Driessche N."/>
            <person name="Cronin A."/>
            <person name="Goodhead I."/>
            <person name="Muzny D.M."/>
            <person name="Mourier T."/>
            <person name="Pain A."/>
            <person name="Lu M."/>
            <person name="Harper D."/>
            <person name="Lindsay R."/>
            <person name="Hauser H."/>
            <person name="James K.D."/>
            <person name="Quiles M."/>
            <person name="Madan Babu M."/>
            <person name="Saito T."/>
            <person name="Buchrieser C."/>
            <person name="Wardroper A."/>
            <person name="Felder M."/>
            <person name="Thangavelu M."/>
            <person name="Johnson D."/>
            <person name="Knights A."/>
            <person name="Loulseged H."/>
            <person name="Mungall K.L."/>
            <person name="Oliver K."/>
            <person name="Price C."/>
            <person name="Quail M.A."/>
            <person name="Urushihara H."/>
            <person name="Hernandez J."/>
            <person name="Rabbinowitsch E."/>
            <person name="Steffen D."/>
            <person name="Sanders M."/>
            <person name="Ma J."/>
            <person name="Kohara Y."/>
            <person name="Sharp S."/>
            <person name="Simmonds M.N."/>
            <person name="Spiegler S."/>
            <person name="Tivey A."/>
            <person name="Sugano S."/>
            <person name="White B."/>
            <person name="Walker D."/>
            <person name="Woodward J.R."/>
            <person name="Winckler T."/>
            <person name="Tanaka Y."/>
            <person name="Shaulsky G."/>
            <person name="Schleicher M."/>
            <person name="Weinstock G.M."/>
            <person name="Rosenthal A."/>
            <person name="Cox E.C."/>
            <person name="Chisholm R.L."/>
            <person name="Gibbs R.A."/>
            <person name="Loomis W.F."/>
            <person name="Platzer M."/>
            <person name="Kay R.R."/>
            <person name="Williams J.G."/>
            <person name="Dear P.H."/>
            <person name="Noegel A.A."/>
            <person name="Barrell B.G."/>
            <person name="Kuspa A."/>
        </authorList>
    </citation>
    <scope>NUCLEOTIDE SEQUENCE [LARGE SCALE GENOMIC DNA]</scope>
    <source>
        <strain>AX4</strain>
    </source>
</reference>
<protein>
    <recommendedName>
        <fullName>Uncharacterized histidine-rich protein DDB_G0274557</fullName>
    </recommendedName>
</protein>
<gene>
    <name type="ORF">DDB_G0274557</name>
</gene>
<keyword id="KW-1185">Reference proteome</keyword>
<keyword id="KW-0964">Secreted</keyword>
<keyword id="KW-0732">Signal</keyword>
<name>Y7791_DICDI</name>
<sequence length="233" mass="28936">MEIKYFLVLLVGFLLVLPSIVNPYRKGVTITNQQPKINIYQLDVNNPHNPNNNPHNPHNPNNNPHHPHHLHHHHHHHHHHHHHHHHHHHHHHHHHHPHHPHHHPHHHHHPHHHHHHHHHHHHHHHHHHHHHHHHHHHHHHHHHHHHHHHHHHHHPHHHPHPHPHPHPHPHLHPNPHPHPHPHPHPHPHPHHHPNPNPHPHPHPHPHHHHHHQEASECLSYQGNRNRLFIKRDY</sequence>
<proteinExistence type="inferred from homology"/>
<dbReference type="EMBL" id="AC123513">
    <property type="protein sequence ID" value="AAM44363.1"/>
    <property type="molecule type" value="Genomic_DNA"/>
</dbReference>
<dbReference type="EMBL" id="AAFI02000012">
    <property type="protein sequence ID" value="EAL70171.1"/>
    <property type="molecule type" value="Genomic_DNA"/>
</dbReference>
<dbReference type="RefSeq" id="XP_644032.1">
    <property type="nucleotide sequence ID" value="XM_638940.1"/>
</dbReference>
<dbReference type="PaxDb" id="44689-DDB0167791"/>
<dbReference type="EnsemblProtists" id="EAL70171">
    <property type="protein sequence ID" value="EAL70171"/>
    <property type="gene ID" value="DDB_G0274557"/>
</dbReference>
<dbReference type="GeneID" id="8619462"/>
<dbReference type="KEGG" id="ddi:DDB_G0274557"/>
<dbReference type="dictyBase" id="DDB_G0274557"/>
<dbReference type="HOGENOM" id="CLU_1191752_0_0_1"/>
<dbReference type="InParanoid" id="Q8MP30"/>
<dbReference type="PRO" id="PR:Q8MP30"/>
<dbReference type="Proteomes" id="UP000002195">
    <property type="component" value="Chromosome 2"/>
</dbReference>
<dbReference type="GO" id="GO:0005576">
    <property type="term" value="C:extracellular region"/>
    <property type="evidence" value="ECO:0007669"/>
    <property type="project" value="UniProtKB-SubCell"/>
</dbReference>